<gene>
    <name evidence="1" type="primary">smpB</name>
    <name type="ordered locus">pc1707</name>
</gene>
<accession>Q6MAG8</accession>
<reference key="1">
    <citation type="journal article" date="2004" name="Science">
        <title>Illuminating the evolutionary history of chlamydiae.</title>
        <authorList>
            <person name="Horn M."/>
            <person name="Collingro A."/>
            <person name="Schmitz-Esser S."/>
            <person name="Beier C.L."/>
            <person name="Purkhold U."/>
            <person name="Fartmann B."/>
            <person name="Brandt P."/>
            <person name="Nyakatura G.J."/>
            <person name="Droege M."/>
            <person name="Frishman D."/>
            <person name="Rattei T."/>
            <person name="Mewes H.-W."/>
            <person name="Wagner M."/>
        </authorList>
    </citation>
    <scope>NUCLEOTIDE SEQUENCE [LARGE SCALE GENOMIC DNA]</scope>
    <source>
        <strain>UWE25</strain>
    </source>
</reference>
<feature type="chain" id="PRO_0000102999" description="SsrA-binding protein">
    <location>
        <begin position="1"/>
        <end position="153"/>
    </location>
</feature>
<feature type="region of interest" description="Disordered" evidence="2">
    <location>
        <begin position="133"/>
        <end position="153"/>
    </location>
</feature>
<feature type="compositionally biased region" description="Basic and acidic residues" evidence="2">
    <location>
        <begin position="133"/>
        <end position="143"/>
    </location>
</feature>
<feature type="compositionally biased region" description="Low complexity" evidence="2">
    <location>
        <begin position="144"/>
        <end position="153"/>
    </location>
</feature>
<keyword id="KW-0963">Cytoplasm</keyword>
<keyword id="KW-1185">Reference proteome</keyword>
<keyword id="KW-0694">RNA-binding</keyword>
<organism>
    <name type="scientific">Protochlamydia amoebophila (strain UWE25)</name>
    <dbReference type="NCBI Taxonomy" id="264201"/>
    <lineage>
        <taxon>Bacteria</taxon>
        <taxon>Pseudomonadati</taxon>
        <taxon>Chlamydiota</taxon>
        <taxon>Chlamydiia</taxon>
        <taxon>Parachlamydiales</taxon>
        <taxon>Parachlamydiaceae</taxon>
        <taxon>Candidatus Protochlamydia</taxon>
    </lineage>
</organism>
<protein>
    <recommendedName>
        <fullName evidence="1">SsrA-binding protein</fullName>
    </recommendedName>
    <alternativeName>
        <fullName evidence="1">Small protein B</fullName>
    </alternativeName>
</protein>
<evidence type="ECO:0000255" key="1">
    <source>
        <dbReference type="HAMAP-Rule" id="MF_00023"/>
    </source>
</evidence>
<evidence type="ECO:0000256" key="2">
    <source>
        <dbReference type="SAM" id="MobiDB-lite"/>
    </source>
</evidence>
<proteinExistence type="inferred from homology"/>
<sequence>MKDKHSDLVSNRRATHDYEILETFETGIVLQGTEIKSIRDHGATLQDAYVKVIHNELWLIGCNIAHYRFGNIHNHEEKRDRKLLMHKREIKKCKGAIQEKGLALIPLALYLKQGRIKVRIAIAKGKKSFDKRADLKERDDKRQMQQALKQQQY</sequence>
<dbReference type="EMBL" id="BX908798">
    <property type="protein sequence ID" value="CAF24431.1"/>
    <property type="molecule type" value="Genomic_DNA"/>
</dbReference>
<dbReference type="RefSeq" id="WP_011176252.1">
    <property type="nucleotide sequence ID" value="NC_005861.2"/>
</dbReference>
<dbReference type="SMR" id="Q6MAG8"/>
<dbReference type="STRING" id="264201.pc1707"/>
<dbReference type="KEGG" id="pcu:PC_RS08175"/>
<dbReference type="eggNOG" id="COG0691">
    <property type="taxonomic scope" value="Bacteria"/>
</dbReference>
<dbReference type="HOGENOM" id="CLU_108953_0_1_0"/>
<dbReference type="OrthoDB" id="9805462at2"/>
<dbReference type="Proteomes" id="UP000000529">
    <property type="component" value="Chromosome"/>
</dbReference>
<dbReference type="GO" id="GO:0005829">
    <property type="term" value="C:cytosol"/>
    <property type="evidence" value="ECO:0007669"/>
    <property type="project" value="TreeGrafter"/>
</dbReference>
<dbReference type="GO" id="GO:0003723">
    <property type="term" value="F:RNA binding"/>
    <property type="evidence" value="ECO:0007669"/>
    <property type="project" value="UniProtKB-UniRule"/>
</dbReference>
<dbReference type="GO" id="GO:0070929">
    <property type="term" value="P:trans-translation"/>
    <property type="evidence" value="ECO:0007669"/>
    <property type="project" value="UniProtKB-UniRule"/>
</dbReference>
<dbReference type="CDD" id="cd09294">
    <property type="entry name" value="SmpB"/>
    <property type="match status" value="1"/>
</dbReference>
<dbReference type="Gene3D" id="2.40.280.10">
    <property type="match status" value="1"/>
</dbReference>
<dbReference type="HAMAP" id="MF_00023">
    <property type="entry name" value="SmpB"/>
    <property type="match status" value="1"/>
</dbReference>
<dbReference type="InterPro" id="IPR023620">
    <property type="entry name" value="SmpB"/>
</dbReference>
<dbReference type="InterPro" id="IPR000037">
    <property type="entry name" value="SsrA-bd_prot"/>
</dbReference>
<dbReference type="InterPro" id="IPR020081">
    <property type="entry name" value="SsrA-bd_prot_CS"/>
</dbReference>
<dbReference type="NCBIfam" id="NF003843">
    <property type="entry name" value="PRK05422.1"/>
    <property type="match status" value="1"/>
</dbReference>
<dbReference type="NCBIfam" id="TIGR00086">
    <property type="entry name" value="smpB"/>
    <property type="match status" value="1"/>
</dbReference>
<dbReference type="PANTHER" id="PTHR30308:SF2">
    <property type="entry name" value="SSRA-BINDING PROTEIN"/>
    <property type="match status" value="1"/>
</dbReference>
<dbReference type="PANTHER" id="PTHR30308">
    <property type="entry name" value="TMRNA-BINDING COMPONENT OF TRANS-TRANSLATION TAGGING COMPLEX"/>
    <property type="match status" value="1"/>
</dbReference>
<dbReference type="Pfam" id="PF01668">
    <property type="entry name" value="SmpB"/>
    <property type="match status" value="1"/>
</dbReference>
<dbReference type="SUPFAM" id="SSF74982">
    <property type="entry name" value="Small protein B (SmpB)"/>
    <property type="match status" value="1"/>
</dbReference>
<dbReference type="PROSITE" id="PS01317">
    <property type="entry name" value="SSRP"/>
    <property type="match status" value="1"/>
</dbReference>
<name>SSRP_PARUW</name>
<comment type="function">
    <text evidence="1">Required for rescue of stalled ribosomes mediated by trans-translation. Binds to transfer-messenger RNA (tmRNA), required for stable association of tmRNA with ribosomes. tmRNA and SmpB together mimic tRNA shape, replacing the anticodon stem-loop with SmpB. tmRNA is encoded by the ssrA gene; the 2 termini fold to resemble tRNA(Ala) and it encodes a 'tag peptide', a short internal open reading frame. During trans-translation Ala-aminoacylated tmRNA acts like a tRNA, entering the A-site of stalled ribosomes, displacing the stalled mRNA. The ribosome then switches to translate the ORF on the tmRNA; the nascent peptide is terminated with the 'tag peptide' encoded by the tmRNA and targeted for degradation. The ribosome is freed to recommence translation, which seems to be the essential function of trans-translation.</text>
</comment>
<comment type="subcellular location">
    <subcellularLocation>
        <location evidence="1">Cytoplasm</location>
    </subcellularLocation>
    <text evidence="1">The tmRNA-SmpB complex associates with stalled 70S ribosomes.</text>
</comment>
<comment type="similarity">
    <text evidence="1">Belongs to the SmpB family.</text>
</comment>